<dbReference type="EC" id="5.4.99.26"/>
<dbReference type="EMBL" id="AE005174">
    <property type="protein sequence ID" value="AAG57905.1"/>
    <property type="molecule type" value="Genomic_DNA"/>
</dbReference>
<dbReference type="EMBL" id="BA000007">
    <property type="protein sequence ID" value="BAB37074.1"/>
    <property type="molecule type" value="Genomic_DNA"/>
</dbReference>
<dbReference type="PIR" id="C91085">
    <property type="entry name" value="C91085"/>
</dbReference>
<dbReference type="PIR" id="E85930">
    <property type="entry name" value="E85930"/>
</dbReference>
<dbReference type="RefSeq" id="NP_311678.1">
    <property type="nucleotide sequence ID" value="NC_002695.1"/>
</dbReference>
<dbReference type="RefSeq" id="WP_000890002.1">
    <property type="nucleotide sequence ID" value="NZ_VOAI01000003.1"/>
</dbReference>
<dbReference type="SMR" id="Q8X6T6"/>
<dbReference type="STRING" id="155864.Z4107"/>
<dbReference type="GeneID" id="916545"/>
<dbReference type="KEGG" id="ece:Z4107"/>
<dbReference type="KEGG" id="ecs:ECs_3651"/>
<dbReference type="PATRIC" id="fig|386585.9.peg.3817"/>
<dbReference type="eggNOG" id="COG0564">
    <property type="taxonomic scope" value="Bacteria"/>
</dbReference>
<dbReference type="HOGENOM" id="CLU_016902_11_4_6"/>
<dbReference type="OMA" id="DRHETQF"/>
<dbReference type="Proteomes" id="UP000000558">
    <property type="component" value="Chromosome"/>
</dbReference>
<dbReference type="Proteomes" id="UP000002519">
    <property type="component" value="Chromosome"/>
</dbReference>
<dbReference type="GO" id="GO:0003723">
    <property type="term" value="F:RNA binding"/>
    <property type="evidence" value="ECO:0007669"/>
    <property type="project" value="InterPro"/>
</dbReference>
<dbReference type="GO" id="GO:0160149">
    <property type="term" value="F:tRNA pseudouridine(65) synthase activity"/>
    <property type="evidence" value="ECO:0007669"/>
    <property type="project" value="UniProtKB-EC"/>
</dbReference>
<dbReference type="GO" id="GO:0000455">
    <property type="term" value="P:enzyme-directed rRNA pseudouridine synthesis"/>
    <property type="evidence" value="ECO:0007669"/>
    <property type="project" value="TreeGrafter"/>
</dbReference>
<dbReference type="GO" id="GO:0008033">
    <property type="term" value="P:tRNA processing"/>
    <property type="evidence" value="ECO:0007669"/>
    <property type="project" value="UniProtKB-KW"/>
</dbReference>
<dbReference type="CDD" id="cd02563">
    <property type="entry name" value="PseudoU_synth_TruC"/>
    <property type="match status" value="1"/>
</dbReference>
<dbReference type="FunFam" id="3.30.2350.10:FF:000008">
    <property type="entry name" value="tRNA pseudouridine synthase C"/>
    <property type="match status" value="1"/>
</dbReference>
<dbReference type="Gene3D" id="3.30.2350.10">
    <property type="entry name" value="Pseudouridine synthase"/>
    <property type="match status" value="1"/>
</dbReference>
<dbReference type="InterPro" id="IPR020103">
    <property type="entry name" value="PsdUridine_synth_cat_dom_sf"/>
</dbReference>
<dbReference type="InterPro" id="IPR006224">
    <property type="entry name" value="PsdUridine_synth_RluA-like_CS"/>
</dbReference>
<dbReference type="InterPro" id="IPR006145">
    <property type="entry name" value="PsdUridine_synth_RsuA/RluA"/>
</dbReference>
<dbReference type="InterPro" id="IPR050188">
    <property type="entry name" value="RluA_PseudoU_synthase"/>
</dbReference>
<dbReference type="NCBIfam" id="NF008321">
    <property type="entry name" value="PRK11112.1"/>
    <property type="match status" value="1"/>
</dbReference>
<dbReference type="PANTHER" id="PTHR21600">
    <property type="entry name" value="MITOCHONDRIAL RNA PSEUDOURIDINE SYNTHASE"/>
    <property type="match status" value="1"/>
</dbReference>
<dbReference type="PANTHER" id="PTHR21600:SF56">
    <property type="entry name" value="TRNA PSEUDOURIDINE SYNTHASE C"/>
    <property type="match status" value="1"/>
</dbReference>
<dbReference type="Pfam" id="PF00849">
    <property type="entry name" value="PseudoU_synth_2"/>
    <property type="match status" value="1"/>
</dbReference>
<dbReference type="SUPFAM" id="SSF55120">
    <property type="entry name" value="Pseudouridine synthase"/>
    <property type="match status" value="1"/>
</dbReference>
<dbReference type="PROSITE" id="PS01129">
    <property type="entry name" value="PSI_RLU"/>
    <property type="match status" value="1"/>
</dbReference>
<keyword id="KW-0413">Isomerase</keyword>
<keyword id="KW-1185">Reference proteome</keyword>
<keyword id="KW-0819">tRNA processing</keyword>
<protein>
    <recommendedName>
        <fullName>tRNA pseudouridine synthase C</fullName>
        <ecNumber>5.4.99.26</ecNumber>
    </recommendedName>
    <alternativeName>
        <fullName>tRNA pseudouridine(65) synthase</fullName>
    </alternativeName>
    <alternativeName>
        <fullName>tRNA pseudouridylate synthase C</fullName>
    </alternativeName>
    <alternativeName>
        <fullName>tRNA-uridine isomerase C</fullName>
    </alternativeName>
</protein>
<organism>
    <name type="scientific">Escherichia coli O157:H7</name>
    <dbReference type="NCBI Taxonomy" id="83334"/>
    <lineage>
        <taxon>Bacteria</taxon>
        <taxon>Pseudomonadati</taxon>
        <taxon>Pseudomonadota</taxon>
        <taxon>Gammaproteobacteria</taxon>
        <taxon>Enterobacterales</taxon>
        <taxon>Enterobacteriaceae</taxon>
        <taxon>Escherichia</taxon>
    </lineage>
</organism>
<comment type="function">
    <text evidence="1">Responsible for synthesis of pseudouridine from uracil-65 in transfer RNAs.</text>
</comment>
<comment type="catalytic activity">
    <reaction>
        <text>uridine(65) in tRNA = pseudouridine(65) in tRNA</text>
        <dbReference type="Rhea" id="RHEA:42536"/>
        <dbReference type="Rhea" id="RHEA-COMP:10103"/>
        <dbReference type="Rhea" id="RHEA-COMP:10104"/>
        <dbReference type="ChEBI" id="CHEBI:65314"/>
        <dbReference type="ChEBI" id="CHEBI:65315"/>
        <dbReference type="EC" id="5.4.99.26"/>
    </reaction>
</comment>
<comment type="similarity">
    <text evidence="2">Belongs to the pseudouridine synthase RluA family.</text>
</comment>
<reference key="1">
    <citation type="journal article" date="2001" name="Nature">
        <title>Genome sequence of enterohaemorrhagic Escherichia coli O157:H7.</title>
        <authorList>
            <person name="Perna N.T."/>
            <person name="Plunkett G. III"/>
            <person name="Burland V."/>
            <person name="Mau B."/>
            <person name="Glasner J.D."/>
            <person name="Rose D.J."/>
            <person name="Mayhew G.F."/>
            <person name="Evans P.S."/>
            <person name="Gregor J."/>
            <person name="Kirkpatrick H.A."/>
            <person name="Posfai G."/>
            <person name="Hackett J."/>
            <person name="Klink S."/>
            <person name="Boutin A."/>
            <person name="Shao Y."/>
            <person name="Miller L."/>
            <person name="Grotbeck E.J."/>
            <person name="Davis N.W."/>
            <person name="Lim A."/>
            <person name="Dimalanta E.T."/>
            <person name="Potamousis K."/>
            <person name="Apodaca J."/>
            <person name="Anantharaman T.S."/>
            <person name="Lin J."/>
            <person name="Yen G."/>
            <person name="Schwartz D.C."/>
            <person name="Welch R.A."/>
            <person name="Blattner F.R."/>
        </authorList>
    </citation>
    <scope>NUCLEOTIDE SEQUENCE [LARGE SCALE GENOMIC DNA]</scope>
    <source>
        <strain>O157:H7 / EDL933 / ATCC 700927 / EHEC</strain>
    </source>
</reference>
<reference key="2">
    <citation type="journal article" date="2001" name="DNA Res.">
        <title>Complete genome sequence of enterohemorrhagic Escherichia coli O157:H7 and genomic comparison with a laboratory strain K-12.</title>
        <authorList>
            <person name="Hayashi T."/>
            <person name="Makino K."/>
            <person name="Ohnishi M."/>
            <person name="Kurokawa K."/>
            <person name="Ishii K."/>
            <person name="Yokoyama K."/>
            <person name="Han C.-G."/>
            <person name="Ohtsubo E."/>
            <person name="Nakayama K."/>
            <person name="Murata T."/>
            <person name="Tanaka M."/>
            <person name="Tobe T."/>
            <person name="Iida T."/>
            <person name="Takami H."/>
            <person name="Honda T."/>
            <person name="Sasakawa C."/>
            <person name="Ogasawara N."/>
            <person name="Yasunaga T."/>
            <person name="Kuhara S."/>
            <person name="Shiba T."/>
            <person name="Hattori M."/>
            <person name="Shinagawa H."/>
        </authorList>
    </citation>
    <scope>NUCLEOTIDE SEQUENCE [LARGE SCALE GENOMIC DNA]</scope>
    <source>
        <strain>O157:H7 / Sakai / RIMD 0509952 / EHEC</strain>
    </source>
</reference>
<accession>Q8X6T6</accession>
<feature type="chain" id="PRO_0000162713" description="tRNA pseudouridine synthase C">
    <location>
        <begin position="1"/>
        <end position="260"/>
    </location>
</feature>
<feature type="active site" evidence="1">
    <location>
        <position position="54"/>
    </location>
</feature>
<gene>
    <name type="primary">truC</name>
    <name type="ordered locus">Z4107</name>
    <name type="ordered locus">ECs3651</name>
</gene>
<name>TRUC_ECO57</name>
<sequence length="260" mass="29709">MLEILYQDEWLVAVNKPSGWLVHRSWLDRDEKVVVMQTVRDQIGQHVFTAHRLDRPTSGVLLMGLSSEAGRLLAQQFEQHQIQKRYHAIVRGWLMEEAVLDYPLVEELDKIADKFAREDKGPQPAVTHYRGLATVEMPVATGRYPTTRYGLVELEPKTGRKHQLRRHLAHLRHPIIGDSKHGDLRQNRSGAEHFGLQRLMLHASQLSLTHPFTGEPLTIHAGLDDTWMQALSQFGWRGLLPENERVEFSAPSGQDGERSS</sequence>
<evidence type="ECO:0000250" key="1"/>
<evidence type="ECO:0000305" key="2"/>
<proteinExistence type="inferred from homology"/>